<protein>
    <recommendedName>
        <fullName evidence="1">Kynurenine formamidase</fullName>
        <shortName evidence="1">KFA</shortName>
        <shortName evidence="1">KFase</shortName>
        <ecNumber evidence="1">3.5.1.9</ecNumber>
    </recommendedName>
    <alternativeName>
        <fullName evidence="1">Arylformamidase</fullName>
    </alternativeName>
    <alternativeName>
        <fullName evidence="1">N-formylkynurenine formamidase</fullName>
        <shortName evidence="1">FKF</shortName>
    </alternativeName>
</protein>
<reference key="1">
    <citation type="journal article" date="2011" name="J. Bacteriol.">
        <title>Complete genome sequence of the plant growth-promoting endophyte Burkholderia phytofirmans strain PsJN.</title>
        <authorList>
            <person name="Weilharter A."/>
            <person name="Mitter B."/>
            <person name="Shin M.V."/>
            <person name="Chain P.S."/>
            <person name="Nowak J."/>
            <person name="Sessitsch A."/>
        </authorList>
    </citation>
    <scope>NUCLEOTIDE SEQUENCE [LARGE SCALE GENOMIC DNA]</scope>
    <source>
        <strain>DSM 17436 / LMG 22146 / PsJN</strain>
    </source>
</reference>
<accession>B2SY84</accession>
<name>KYNB_PARPJ</name>
<dbReference type="EC" id="3.5.1.9" evidence="1"/>
<dbReference type="EMBL" id="CP001052">
    <property type="protein sequence ID" value="ACD17619.1"/>
    <property type="molecule type" value="Genomic_DNA"/>
</dbReference>
<dbReference type="RefSeq" id="WP_012434189.1">
    <property type="nucleotide sequence ID" value="NC_010681.1"/>
</dbReference>
<dbReference type="SMR" id="B2SY84"/>
<dbReference type="STRING" id="398527.Bphyt_3227"/>
<dbReference type="KEGG" id="bpy:Bphyt_3227"/>
<dbReference type="eggNOG" id="COG1878">
    <property type="taxonomic scope" value="Bacteria"/>
</dbReference>
<dbReference type="HOGENOM" id="CLU_030671_3_1_4"/>
<dbReference type="OrthoDB" id="9796085at2"/>
<dbReference type="UniPathway" id="UPA00333">
    <property type="reaction ID" value="UER00454"/>
</dbReference>
<dbReference type="Proteomes" id="UP000001739">
    <property type="component" value="Chromosome 1"/>
</dbReference>
<dbReference type="GO" id="GO:0004061">
    <property type="term" value="F:arylformamidase activity"/>
    <property type="evidence" value="ECO:0000250"/>
    <property type="project" value="UniProtKB"/>
</dbReference>
<dbReference type="GO" id="GO:0004328">
    <property type="term" value="F:formamidase activity"/>
    <property type="evidence" value="ECO:0007669"/>
    <property type="project" value="InterPro"/>
</dbReference>
<dbReference type="GO" id="GO:0008270">
    <property type="term" value="F:zinc ion binding"/>
    <property type="evidence" value="ECO:0007669"/>
    <property type="project" value="UniProtKB-UniRule"/>
</dbReference>
<dbReference type="GO" id="GO:0043420">
    <property type="term" value="P:anthranilate metabolic process"/>
    <property type="evidence" value="ECO:0000250"/>
    <property type="project" value="UniProtKB"/>
</dbReference>
<dbReference type="GO" id="GO:0019441">
    <property type="term" value="P:L-tryptophan catabolic process to kynurenine"/>
    <property type="evidence" value="ECO:0000250"/>
    <property type="project" value="UniProtKB"/>
</dbReference>
<dbReference type="FunFam" id="3.50.30.50:FF:000001">
    <property type="entry name" value="Kynurenine formamidase"/>
    <property type="match status" value="1"/>
</dbReference>
<dbReference type="Gene3D" id="3.50.30.50">
    <property type="entry name" value="Putative cyclase"/>
    <property type="match status" value="1"/>
</dbReference>
<dbReference type="HAMAP" id="MF_01969">
    <property type="entry name" value="KynB"/>
    <property type="match status" value="1"/>
</dbReference>
<dbReference type="InterPro" id="IPR007325">
    <property type="entry name" value="KFase/CYL"/>
</dbReference>
<dbReference type="InterPro" id="IPR037175">
    <property type="entry name" value="KFase_sf"/>
</dbReference>
<dbReference type="InterPro" id="IPR017484">
    <property type="entry name" value="Kynurenine_formamidase_bac"/>
</dbReference>
<dbReference type="NCBIfam" id="TIGR03035">
    <property type="entry name" value="trp_arylform"/>
    <property type="match status" value="1"/>
</dbReference>
<dbReference type="PANTHER" id="PTHR31118">
    <property type="entry name" value="CYCLASE-LIKE PROTEIN 2"/>
    <property type="match status" value="1"/>
</dbReference>
<dbReference type="PANTHER" id="PTHR31118:SF32">
    <property type="entry name" value="KYNURENINE FORMAMIDASE"/>
    <property type="match status" value="1"/>
</dbReference>
<dbReference type="Pfam" id="PF04199">
    <property type="entry name" value="Cyclase"/>
    <property type="match status" value="1"/>
</dbReference>
<dbReference type="SUPFAM" id="SSF102198">
    <property type="entry name" value="Putative cyclase"/>
    <property type="match status" value="1"/>
</dbReference>
<evidence type="ECO:0000255" key="1">
    <source>
        <dbReference type="HAMAP-Rule" id="MF_01969"/>
    </source>
</evidence>
<gene>
    <name evidence="1" type="primary">kynB</name>
    <name type="ordered locus">Bphyt_3227</name>
</gene>
<comment type="function">
    <text evidence="1">Catalyzes the hydrolysis of N-formyl-L-kynurenine to L-kynurenine, the second step in the kynurenine pathway of tryptophan degradation.</text>
</comment>
<comment type="catalytic activity">
    <reaction evidence="1">
        <text>N-formyl-L-kynurenine + H2O = L-kynurenine + formate + H(+)</text>
        <dbReference type="Rhea" id="RHEA:13009"/>
        <dbReference type="ChEBI" id="CHEBI:15377"/>
        <dbReference type="ChEBI" id="CHEBI:15378"/>
        <dbReference type="ChEBI" id="CHEBI:15740"/>
        <dbReference type="ChEBI" id="CHEBI:57959"/>
        <dbReference type="ChEBI" id="CHEBI:58629"/>
        <dbReference type="EC" id="3.5.1.9"/>
    </reaction>
</comment>
<comment type="cofactor">
    <cofactor evidence="1">
        <name>Zn(2+)</name>
        <dbReference type="ChEBI" id="CHEBI:29105"/>
    </cofactor>
    <text evidence="1">Binds 2 zinc ions per subunit.</text>
</comment>
<comment type="pathway">
    <text evidence="1">Amino-acid degradation; L-tryptophan degradation via kynurenine pathway; L-kynurenine from L-tryptophan: step 2/2.</text>
</comment>
<comment type="subunit">
    <text evidence="1">Homodimer.</text>
</comment>
<comment type="similarity">
    <text evidence="1">Belongs to the Cyclase 1 superfamily. KynB family.</text>
</comment>
<proteinExistence type="inferred from homology"/>
<sequence length="212" mass="22802">MPTLWDITPAVDTATPVWPGDTPVGIERVWRMEAGSPVNVARLTLSPHTGAHTDAPLHYDAEGVAIGEVPLDAYLGRCRVIHCIGASPVVTPQHLSGSLDDLPPRVLLRTYRNAPTAAWDSAFCAVAPDTIDLLAARGVKLIGIDTPSLDPQESKTMDAHHRIRTHRMAILEGIVLDDVAPGDYELIALPLKLTTLDASPVRAILRALPESQ</sequence>
<organism>
    <name type="scientific">Paraburkholderia phytofirmans (strain DSM 17436 / LMG 22146 / PsJN)</name>
    <name type="common">Burkholderia phytofirmans</name>
    <dbReference type="NCBI Taxonomy" id="398527"/>
    <lineage>
        <taxon>Bacteria</taxon>
        <taxon>Pseudomonadati</taxon>
        <taxon>Pseudomonadota</taxon>
        <taxon>Betaproteobacteria</taxon>
        <taxon>Burkholderiales</taxon>
        <taxon>Burkholderiaceae</taxon>
        <taxon>Paraburkholderia</taxon>
    </lineage>
</organism>
<keyword id="KW-0378">Hydrolase</keyword>
<keyword id="KW-0479">Metal-binding</keyword>
<keyword id="KW-0823">Tryptophan catabolism</keyword>
<keyword id="KW-0862">Zinc</keyword>
<feature type="chain" id="PRO_0000362114" description="Kynurenine formamidase">
    <location>
        <begin position="1"/>
        <end position="212"/>
    </location>
</feature>
<feature type="active site" description="Proton donor/acceptor" evidence="1">
    <location>
        <position position="58"/>
    </location>
</feature>
<feature type="binding site" evidence="1">
    <location>
        <position position="18"/>
    </location>
    <ligand>
        <name>substrate</name>
    </ligand>
</feature>
<feature type="binding site" evidence="1">
    <location>
        <position position="48"/>
    </location>
    <ligand>
        <name>Zn(2+)</name>
        <dbReference type="ChEBI" id="CHEBI:29105"/>
        <label>1</label>
    </ligand>
</feature>
<feature type="binding site" evidence="1">
    <location>
        <position position="52"/>
    </location>
    <ligand>
        <name>Zn(2+)</name>
        <dbReference type="ChEBI" id="CHEBI:29105"/>
        <label>1</label>
    </ligand>
</feature>
<feature type="binding site" evidence="1">
    <location>
        <position position="54"/>
    </location>
    <ligand>
        <name>Zn(2+)</name>
        <dbReference type="ChEBI" id="CHEBI:29105"/>
        <label>1</label>
    </ligand>
</feature>
<feature type="binding site" evidence="1">
    <location>
        <position position="54"/>
    </location>
    <ligand>
        <name>Zn(2+)</name>
        <dbReference type="ChEBI" id="CHEBI:29105"/>
        <label>2</label>
    </ligand>
</feature>
<feature type="binding site" evidence="1">
    <location>
        <position position="160"/>
    </location>
    <ligand>
        <name>Zn(2+)</name>
        <dbReference type="ChEBI" id="CHEBI:29105"/>
        <label>2</label>
    </ligand>
</feature>
<feature type="binding site" evidence="1">
    <location>
        <position position="172"/>
    </location>
    <ligand>
        <name>Zn(2+)</name>
        <dbReference type="ChEBI" id="CHEBI:29105"/>
        <label>1</label>
    </ligand>
</feature>
<feature type="binding site" evidence="1">
    <location>
        <position position="172"/>
    </location>
    <ligand>
        <name>Zn(2+)</name>
        <dbReference type="ChEBI" id="CHEBI:29105"/>
        <label>2</label>
    </ligand>
</feature>